<proteinExistence type="inferred from homology"/>
<comment type="function">
    <text evidence="1">Trims short 3' overhangs of a variety of RNA species, leaving a one or two nucleotide 3' overhang. Responsible for the end-turnover of tRNA: specifically removes the terminal AMP residue from uncharged tRNA (tRNA-C-C-A). Also appears to be involved in tRNA biosynthesis.</text>
</comment>
<comment type="cofactor">
    <cofactor evidence="1">
        <name>Mg(2+)</name>
        <dbReference type="ChEBI" id="CHEBI:18420"/>
    </cofactor>
    <text evidence="1">Binds two Mg(2+) per subunit. The active form of the enzyme binds two Mg(2+) ions in its active site. The first Mg(2+) forms only one salt bridge with the protein.</text>
</comment>
<comment type="subunit">
    <text evidence="1">Homodimer.</text>
</comment>
<comment type="similarity">
    <text evidence="1">Belongs to the RNase T family.</text>
</comment>
<dbReference type="EC" id="3.1.13.-" evidence="1"/>
<dbReference type="EMBL" id="AE008923">
    <property type="protein sequence ID" value="AAM36439.1"/>
    <property type="molecule type" value="Genomic_DNA"/>
</dbReference>
<dbReference type="RefSeq" id="WP_011051010.1">
    <property type="nucleotide sequence ID" value="NC_003919.1"/>
</dbReference>
<dbReference type="SMR" id="Q8PM62"/>
<dbReference type="GeneID" id="66910728"/>
<dbReference type="KEGG" id="xac:XAC1571"/>
<dbReference type="eggNOG" id="COG0847">
    <property type="taxonomic scope" value="Bacteria"/>
</dbReference>
<dbReference type="HOGENOM" id="CLU_082724_0_0_6"/>
<dbReference type="Proteomes" id="UP000000576">
    <property type="component" value="Chromosome"/>
</dbReference>
<dbReference type="GO" id="GO:0005829">
    <property type="term" value="C:cytosol"/>
    <property type="evidence" value="ECO:0007669"/>
    <property type="project" value="TreeGrafter"/>
</dbReference>
<dbReference type="GO" id="GO:0008408">
    <property type="term" value="F:3'-5' exonuclease activity"/>
    <property type="evidence" value="ECO:0007669"/>
    <property type="project" value="TreeGrafter"/>
</dbReference>
<dbReference type="GO" id="GO:0000287">
    <property type="term" value="F:magnesium ion binding"/>
    <property type="evidence" value="ECO:0007669"/>
    <property type="project" value="UniProtKB-UniRule"/>
</dbReference>
<dbReference type="GO" id="GO:0003676">
    <property type="term" value="F:nucleic acid binding"/>
    <property type="evidence" value="ECO:0007669"/>
    <property type="project" value="InterPro"/>
</dbReference>
<dbReference type="GO" id="GO:0016896">
    <property type="term" value="F:RNA exonuclease activity, producing 5'-phosphomonoesters"/>
    <property type="evidence" value="ECO:0007669"/>
    <property type="project" value="UniProtKB-UniRule"/>
</dbReference>
<dbReference type="GO" id="GO:0045004">
    <property type="term" value="P:DNA replication proofreading"/>
    <property type="evidence" value="ECO:0007669"/>
    <property type="project" value="TreeGrafter"/>
</dbReference>
<dbReference type="GO" id="GO:0008033">
    <property type="term" value="P:tRNA processing"/>
    <property type="evidence" value="ECO:0007669"/>
    <property type="project" value="UniProtKB-KW"/>
</dbReference>
<dbReference type="CDD" id="cd06134">
    <property type="entry name" value="RNaseT"/>
    <property type="match status" value="1"/>
</dbReference>
<dbReference type="FunFam" id="3.30.420.10:FF:000009">
    <property type="entry name" value="Ribonuclease T"/>
    <property type="match status" value="1"/>
</dbReference>
<dbReference type="Gene3D" id="3.30.420.10">
    <property type="entry name" value="Ribonuclease H-like superfamily/Ribonuclease H"/>
    <property type="match status" value="1"/>
</dbReference>
<dbReference type="HAMAP" id="MF_00157">
    <property type="entry name" value="RNase_T"/>
    <property type="match status" value="1"/>
</dbReference>
<dbReference type="InterPro" id="IPR013520">
    <property type="entry name" value="Exonuclease_RNaseT/DNA_pol3"/>
</dbReference>
<dbReference type="InterPro" id="IPR005987">
    <property type="entry name" value="RNase_T"/>
</dbReference>
<dbReference type="InterPro" id="IPR012337">
    <property type="entry name" value="RNaseH-like_sf"/>
</dbReference>
<dbReference type="InterPro" id="IPR036397">
    <property type="entry name" value="RNaseH_sf"/>
</dbReference>
<dbReference type="NCBIfam" id="TIGR01298">
    <property type="entry name" value="RNaseT"/>
    <property type="match status" value="1"/>
</dbReference>
<dbReference type="PANTHER" id="PTHR30231">
    <property type="entry name" value="DNA POLYMERASE III SUBUNIT EPSILON"/>
    <property type="match status" value="1"/>
</dbReference>
<dbReference type="PANTHER" id="PTHR30231:SF2">
    <property type="entry name" value="RIBONUCLEASE T"/>
    <property type="match status" value="1"/>
</dbReference>
<dbReference type="Pfam" id="PF00929">
    <property type="entry name" value="RNase_T"/>
    <property type="match status" value="1"/>
</dbReference>
<dbReference type="SMART" id="SM00479">
    <property type="entry name" value="EXOIII"/>
    <property type="match status" value="1"/>
</dbReference>
<dbReference type="SUPFAM" id="SSF53098">
    <property type="entry name" value="Ribonuclease H-like"/>
    <property type="match status" value="1"/>
</dbReference>
<organism>
    <name type="scientific">Xanthomonas axonopodis pv. citri (strain 306)</name>
    <dbReference type="NCBI Taxonomy" id="190486"/>
    <lineage>
        <taxon>Bacteria</taxon>
        <taxon>Pseudomonadati</taxon>
        <taxon>Pseudomonadota</taxon>
        <taxon>Gammaproteobacteria</taxon>
        <taxon>Lysobacterales</taxon>
        <taxon>Lysobacteraceae</taxon>
        <taxon>Xanthomonas</taxon>
    </lineage>
</organism>
<sequence length="213" mass="23213">MRMNEPVDAQPAPSFLPMSRRFRGYLPVVVDVETGGFDWNKHALLEIACVPIEMGADGRFFPGETASAHLVPAPGLEIDPKSLEITGIVLDHPFRFAKQEKEALDHVFAPVRAAVKKYGCQRAILVGHNAHFDLNFLNAAVARVGHKRNPFHPFSVFDTVTLAGVAYGQTVLARAAQAAGLDWNAADAHSAVYDTEQTARLFCKIANAWPGPV</sequence>
<gene>
    <name evidence="1" type="primary">rnt</name>
    <name type="ordered locus">XAC1571</name>
</gene>
<accession>Q8PM62</accession>
<name>RNT_XANAC</name>
<keyword id="KW-0269">Exonuclease</keyword>
<keyword id="KW-0378">Hydrolase</keyword>
<keyword id="KW-0460">Magnesium</keyword>
<keyword id="KW-0479">Metal-binding</keyword>
<keyword id="KW-0540">Nuclease</keyword>
<keyword id="KW-0819">tRNA processing</keyword>
<reference key="1">
    <citation type="journal article" date="2002" name="Nature">
        <title>Comparison of the genomes of two Xanthomonas pathogens with differing host specificities.</title>
        <authorList>
            <person name="da Silva A.C.R."/>
            <person name="Ferro J.A."/>
            <person name="Reinach F.C."/>
            <person name="Farah C.S."/>
            <person name="Furlan L.R."/>
            <person name="Quaggio R.B."/>
            <person name="Monteiro-Vitorello C.B."/>
            <person name="Van Sluys M.A."/>
            <person name="Almeida N.F. Jr."/>
            <person name="Alves L.M.C."/>
            <person name="do Amaral A.M."/>
            <person name="Bertolini M.C."/>
            <person name="Camargo L.E.A."/>
            <person name="Camarotte G."/>
            <person name="Cannavan F."/>
            <person name="Cardozo J."/>
            <person name="Chambergo F."/>
            <person name="Ciapina L.P."/>
            <person name="Cicarelli R.M.B."/>
            <person name="Coutinho L.L."/>
            <person name="Cursino-Santos J.R."/>
            <person name="El-Dorry H."/>
            <person name="Faria J.B."/>
            <person name="Ferreira A.J.S."/>
            <person name="Ferreira R.C.C."/>
            <person name="Ferro M.I.T."/>
            <person name="Formighieri E.F."/>
            <person name="Franco M.C."/>
            <person name="Greggio C.C."/>
            <person name="Gruber A."/>
            <person name="Katsuyama A.M."/>
            <person name="Kishi L.T."/>
            <person name="Leite R.P."/>
            <person name="Lemos E.G.M."/>
            <person name="Lemos M.V.F."/>
            <person name="Locali E.C."/>
            <person name="Machado M.A."/>
            <person name="Madeira A.M.B.N."/>
            <person name="Martinez-Rossi N.M."/>
            <person name="Martins E.C."/>
            <person name="Meidanis J."/>
            <person name="Menck C.F.M."/>
            <person name="Miyaki C.Y."/>
            <person name="Moon D.H."/>
            <person name="Moreira L.M."/>
            <person name="Novo M.T.M."/>
            <person name="Okura V.K."/>
            <person name="Oliveira M.C."/>
            <person name="Oliveira V.R."/>
            <person name="Pereira H.A."/>
            <person name="Rossi A."/>
            <person name="Sena J.A.D."/>
            <person name="Silva C."/>
            <person name="de Souza R.F."/>
            <person name="Spinola L.A.F."/>
            <person name="Takita M.A."/>
            <person name="Tamura R.E."/>
            <person name="Teixeira E.C."/>
            <person name="Tezza R.I.D."/>
            <person name="Trindade dos Santos M."/>
            <person name="Truffi D."/>
            <person name="Tsai S.M."/>
            <person name="White F.F."/>
            <person name="Setubal J.C."/>
            <person name="Kitajima J.P."/>
        </authorList>
    </citation>
    <scope>NUCLEOTIDE SEQUENCE [LARGE SCALE GENOMIC DNA]</scope>
    <source>
        <strain>306</strain>
    </source>
</reference>
<feature type="chain" id="PRO_0000208981" description="Ribonuclease T">
    <location>
        <begin position="1"/>
        <end position="213"/>
    </location>
</feature>
<feature type="domain" description="Exonuclease" evidence="1">
    <location>
        <begin position="28"/>
        <end position="202"/>
    </location>
</feature>
<feature type="active site" description="Proton donor/acceptor" evidence="1">
    <location>
        <position position="189"/>
    </location>
</feature>
<feature type="binding site" evidence="1">
    <location>
        <position position="31"/>
    </location>
    <ligand>
        <name>Mg(2+)</name>
        <dbReference type="ChEBI" id="CHEBI:18420"/>
        <label>1</label>
        <note>catalytic</note>
    </ligand>
</feature>
<feature type="binding site" evidence="1">
    <location>
        <position position="31"/>
    </location>
    <ligand>
        <name>Mg(2+)</name>
        <dbReference type="ChEBI" id="CHEBI:18420"/>
        <label>2</label>
        <note>catalytic</note>
    </ligand>
</feature>
<feature type="binding site" evidence="1">
    <location>
        <position position="33"/>
    </location>
    <ligand>
        <name>Mg(2+)</name>
        <dbReference type="ChEBI" id="CHEBI:18420"/>
        <label>2</label>
        <note>catalytic</note>
    </ligand>
</feature>
<feature type="binding site" evidence="1">
    <location>
        <position position="189"/>
    </location>
    <ligand>
        <name>Mg(2+)</name>
        <dbReference type="ChEBI" id="CHEBI:18420"/>
        <label>2</label>
        <note>catalytic</note>
    </ligand>
</feature>
<feature type="binding site" evidence="1">
    <location>
        <position position="194"/>
    </location>
    <ligand>
        <name>Mg(2+)</name>
        <dbReference type="ChEBI" id="CHEBI:18420"/>
        <label>2</label>
        <note>catalytic</note>
    </ligand>
</feature>
<feature type="site" description="Important for substrate binding and specificity" evidence="1">
    <location>
        <position position="37"/>
    </location>
</feature>
<feature type="site" description="Important for substrate binding and specificity" evidence="1">
    <location>
        <position position="132"/>
    </location>
</feature>
<feature type="site" description="Important for substrate binding and specificity" evidence="1">
    <location>
        <position position="154"/>
    </location>
</feature>
<protein>
    <recommendedName>
        <fullName evidence="1">Ribonuclease T</fullName>
        <ecNumber evidence="1">3.1.13.-</ecNumber>
    </recommendedName>
    <alternativeName>
        <fullName evidence="1">Exoribonuclease T</fullName>
        <shortName evidence="1">RNase T</shortName>
    </alternativeName>
</protein>
<evidence type="ECO:0000255" key="1">
    <source>
        <dbReference type="HAMAP-Rule" id="MF_00157"/>
    </source>
</evidence>